<gene>
    <name evidence="1" type="primary">mraY</name>
    <name type="ordered locus">RSal33209_2497</name>
</gene>
<name>MRAY_RENSM</name>
<organism>
    <name type="scientific">Renibacterium salmoninarum (strain ATCC 33209 / DSM 20767 / JCM 11484 / NBRC 15589 / NCIMB 2235)</name>
    <dbReference type="NCBI Taxonomy" id="288705"/>
    <lineage>
        <taxon>Bacteria</taxon>
        <taxon>Bacillati</taxon>
        <taxon>Actinomycetota</taxon>
        <taxon>Actinomycetes</taxon>
        <taxon>Micrococcales</taxon>
        <taxon>Micrococcaceae</taxon>
        <taxon>Renibacterium</taxon>
    </lineage>
</organism>
<accession>A9WRE1</accession>
<keyword id="KW-0131">Cell cycle</keyword>
<keyword id="KW-0132">Cell division</keyword>
<keyword id="KW-1003">Cell membrane</keyword>
<keyword id="KW-0133">Cell shape</keyword>
<keyword id="KW-0961">Cell wall biogenesis/degradation</keyword>
<keyword id="KW-0460">Magnesium</keyword>
<keyword id="KW-0472">Membrane</keyword>
<keyword id="KW-0479">Metal-binding</keyword>
<keyword id="KW-0573">Peptidoglycan synthesis</keyword>
<keyword id="KW-1185">Reference proteome</keyword>
<keyword id="KW-0808">Transferase</keyword>
<keyword id="KW-0812">Transmembrane</keyword>
<keyword id="KW-1133">Transmembrane helix</keyword>
<feature type="chain" id="PRO_1000074554" description="Phospho-N-acetylmuramoyl-pentapeptide-transferase">
    <location>
        <begin position="1"/>
        <end position="369"/>
    </location>
</feature>
<feature type="transmembrane region" description="Helical" evidence="1">
    <location>
        <begin position="2"/>
        <end position="22"/>
    </location>
</feature>
<feature type="transmembrane region" description="Helical" evidence="1">
    <location>
        <begin position="55"/>
        <end position="75"/>
    </location>
</feature>
<feature type="transmembrane region" description="Helical" evidence="1">
    <location>
        <begin position="82"/>
        <end position="102"/>
    </location>
</feature>
<feature type="transmembrane region" description="Helical" evidence="1">
    <location>
        <begin position="120"/>
        <end position="140"/>
    </location>
</feature>
<feature type="transmembrane region" description="Helical" evidence="1">
    <location>
        <begin position="163"/>
        <end position="183"/>
    </location>
</feature>
<feature type="transmembrane region" description="Helical" evidence="1">
    <location>
        <begin position="196"/>
        <end position="216"/>
    </location>
</feature>
<feature type="transmembrane region" description="Helical" evidence="1">
    <location>
        <begin position="240"/>
        <end position="260"/>
    </location>
</feature>
<feature type="transmembrane region" description="Helical" evidence="1">
    <location>
        <begin position="267"/>
        <end position="287"/>
    </location>
</feature>
<feature type="transmembrane region" description="Helical" evidence="1">
    <location>
        <begin position="292"/>
        <end position="312"/>
    </location>
</feature>
<feature type="transmembrane region" description="Helical" evidence="1">
    <location>
        <begin position="349"/>
        <end position="369"/>
    </location>
</feature>
<comment type="function">
    <text evidence="1">Catalyzes the initial step of the lipid cycle reactions in the biosynthesis of the cell wall peptidoglycan: transfers peptidoglycan precursor phospho-MurNAc-pentapeptide from UDP-MurNAc-pentapeptide onto the lipid carrier undecaprenyl phosphate, yielding undecaprenyl-pyrophosphoryl-MurNAc-pentapeptide, known as lipid I.</text>
</comment>
<comment type="catalytic activity">
    <reaction evidence="1">
        <text>UDP-N-acetyl-alpha-D-muramoyl-L-alanyl-gamma-D-glutamyl-meso-2,6-diaminopimeloyl-D-alanyl-D-alanine + di-trans,octa-cis-undecaprenyl phosphate = di-trans,octa-cis-undecaprenyl diphospho-N-acetyl-alpha-D-muramoyl-L-alanyl-D-glutamyl-meso-2,6-diaminopimeloyl-D-alanyl-D-alanine + UMP</text>
        <dbReference type="Rhea" id="RHEA:28386"/>
        <dbReference type="ChEBI" id="CHEBI:57865"/>
        <dbReference type="ChEBI" id="CHEBI:60392"/>
        <dbReference type="ChEBI" id="CHEBI:61386"/>
        <dbReference type="ChEBI" id="CHEBI:61387"/>
        <dbReference type="EC" id="2.7.8.13"/>
    </reaction>
</comment>
<comment type="cofactor">
    <cofactor evidence="1">
        <name>Mg(2+)</name>
        <dbReference type="ChEBI" id="CHEBI:18420"/>
    </cofactor>
</comment>
<comment type="pathway">
    <text evidence="1">Cell wall biogenesis; peptidoglycan biosynthesis.</text>
</comment>
<comment type="subcellular location">
    <subcellularLocation>
        <location evidence="1">Cell membrane</location>
        <topology evidence="1">Multi-pass membrane protein</topology>
    </subcellularLocation>
</comment>
<comment type="similarity">
    <text evidence="1">Belongs to the glycosyltransferase 4 family. MraY subfamily.</text>
</comment>
<protein>
    <recommendedName>
        <fullName evidence="1">Phospho-N-acetylmuramoyl-pentapeptide-transferase</fullName>
        <ecNumber evidence="1">2.7.8.13</ecNumber>
    </recommendedName>
    <alternativeName>
        <fullName evidence="1">UDP-MurNAc-pentapeptide phosphotransferase</fullName>
    </alternativeName>
</protein>
<dbReference type="EC" id="2.7.8.13" evidence="1"/>
<dbReference type="EMBL" id="CP000910">
    <property type="protein sequence ID" value="ABY24223.1"/>
    <property type="molecule type" value="Genomic_DNA"/>
</dbReference>
<dbReference type="RefSeq" id="WP_012245883.1">
    <property type="nucleotide sequence ID" value="NC_010168.1"/>
</dbReference>
<dbReference type="SMR" id="A9WRE1"/>
<dbReference type="STRING" id="288705.RSal33209_2497"/>
<dbReference type="KEGG" id="rsa:RSal33209_2497"/>
<dbReference type="eggNOG" id="COG0472">
    <property type="taxonomic scope" value="Bacteria"/>
</dbReference>
<dbReference type="HOGENOM" id="CLU_023982_0_1_11"/>
<dbReference type="UniPathway" id="UPA00219"/>
<dbReference type="Proteomes" id="UP000002007">
    <property type="component" value="Chromosome"/>
</dbReference>
<dbReference type="GO" id="GO:0005886">
    <property type="term" value="C:plasma membrane"/>
    <property type="evidence" value="ECO:0007669"/>
    <property type="project" value="UniProtKB-SubCell"/>
</dbReference>
<dbReference type="GO" id="GO:0046872">
    <property type="term" value="F:metal ion binding"/>
    <property type="evidence" value="ECO:0007669"/>
    <property type="project" value="UniProtKB-KW"/>
</dbReference>
<dbReference type="GO" id="GO:0008963">
    <property type="term" value="F:phospho-N-acetylmuramoyl-pentapeptide-transferase activity"/>
    <property type="evidence" value="ECO:0007669"/>
    <property type="project" value="UniProtKB-UniRule"/>
</dbReference>
<dbReference type="GO" id="GO:0051992">
    <property type="term" value="F:UDP-N-acetylmuramoyl-L-alanyl-D-glutamyl-meso-2,6-diaminopimelyl-D-alanyl-D-alanine:undecaprenyl-phosphate transferase activity"/>
    <property type="evidence" value="ECO:0007669"/>
    <property type="project" value="RHEA"/>
</dbReference>
<dbReference type="GO" id="GO:0051301">
    <property type="term" value="P:cell division"/>
    <property type="evidence" value="ECO:0007669"/>
    <property type="project" value="UniProtKB-KW"/>
</dbReference>
<dbReference type="GO" id="GO:0071555">
    <property type="term" value="P:cell wall organization"/>
    <property type="evidence" value="ECO:0007669"/>
    <property type="project" value="UniProtKB-KW"/>
</dbReference>
<dbReference type="GO" id="GO:0009252">
    <property type="term" value="P:peptidoglycan biosynthetic process"/>
    <property type="evidence" value="ECO:0007669"/>
    <property type="project" value="UniProtKB-UniRule"/>
</dbReference>
<dbReference type="GO" id="GO:0008360">
    <property type="term" value="P:regulation of cell shape"/>
    <property type="evidence" value="ECO:0007669"/>
    <property type="project" value="UniProtKB-KW"/>
</dbReference>
<dbReference type="CDD" id="cd06852">
    <property type="entry name" value="GT_MraY"/>
    <property type="match status" value="1"/>
</dbReference>
<dbReference type="HAMAP" id="MF_00038">
    <property type="entry name" value="MraY"/>
    <property type="match status" value="1"/>
</dbReference>
<dbReference type="InterPro" id="IPR000715">
    <property type="entry name" value="Glycosyl_transferase_4"/>
</dbReference>
<dbReference type="InterPro" id="IPR003524">
    <property type="entry name" value="PNAcMuramoyl-5peptid_Trfase"/>
</dbReference>
<dbReference type="InterPro" id="IPR018480">
    <property type="entry name" value="PNAcMuramoyl-5peptid_Trfase_CS"/>
</dbReference>
<dbReference type="NCBIfam" id="TIGR00445">
    <property type="entry name" value="mraY"/>
    <property type="match status" value="1"/>
</dbReference>
<dbReference type="PANTHER" id="PTHR22926">
    <property type="entry name" value="PHOSPHO-N-ACETYLMURAMOYL-PENTAPEPTIDE-TRANSFERASE"/>
    <property type="match status" value="1"/>
</dbReference>
<dbReference type="PANTHER" id="PTHR22926:SF5">
    <property type="entry name" value="PHOSPHO-N-ACETYLMURAMOYL-PENTAPEPTIDE-TRANSFERASE HOMOLOG"/>
    <property type="match status" value="1"/>
</dbReference>
<dbReference type="Pfam" id="PF00953">
    <property type="entry name" value="Glycos_transf_4"/>
    <property type="match status" value="1"/>
</dbReference>
<dbReference type="PROSITE" id="PS01347">
    <property type="entry name" value="MRAY_1"/>
    <property type="match status" value="1"/>
</dbReference>
<dbReference type="PROSITE" id="PS01348">
    <property type="entry name" value="MRAY_2"/>
    <property type="match status" value="1"/>
</dbReference>
<reference key="1">
    <citation type="journal article" date="2008" name="J. Bacteriol.">
        <title>Genome sequence of the fish pathogen Renibacterium salmoninarum suggests reductive evolution away from an environmental Arthrobacter ancestor.</title>
        <authorList>
            <person name="Wiens G.D."/>
            <person name="Rockey D.D."/>
            <person name="Wu Z."/>
            <person name="Chang J."/>
            <person name="Levy R."/>
            <person name="Crane S."/>
            <person name="Chen D.S."/>
            <person name="Capri G.R."/>
            <person name="Burnett J.R."/>
            <person name="Sudheesh P.S."/>
            <person name="Schipma M.J."/>
            <person name="Burd H."/>
            <person name="Bhattacharyya A."/>
            <person name="Rhodes L.D."/>
            <person name="Kaul R."/>
            <person name="Strom M.S."/>
        </authorList>
    </citation>
    <scope>NUCLEOTIDE SEQUENCE [LARGE SCALE GENOMIC DNA]</scope>
    <source>
        <strain>ATCC 33209 / DSM 20767 / JCM 11484 / NBRC 15589 / NCIMB 2235</strain>
    </source>
</reference>
<evidence type="ECO:0000255" key="1">
    <source>
        <dbReference type="HAMAP-Rule" id="MF_00038"/>
    </source>
</evidence>
<sequence>MIPLLMGAGISLALVMIGTQLFIRLLIRKGYGQFIRDDGPTSHHTKRGTPTMGGAVVIGTVILAYLLTHLISWWINPKAPGPSVSGWLLLLLMAGMGLVGFLDDFIKISKQRSLGLNAKAKLILQAAIGILFAVLAINFADHNGRTPATTKISFARDIPGLDLAFAGAGLGVLLFVIWANLIITAATNGVNLTDGLDGLAAGASVMVFGAYTLIGIWQSNQSCGSPRAVSSTVCYEVRDPLDLALLAAIIFGALIGFLWWNTSPAKIFMGDTGSLAIGGAIAGFAILSRTEILLAIIGGLFVLITLSVILQVGFFKLTGGKRLFKMAPLQHHFELKGWAEVTIVVRFWILGGLLVAIGLGAFYAEWVVF</sequence>
<proteinExistence type="inferred from homology"/>